<keyword id="KW-0378">Hydrolase</keyword>
<keyword id="KW-1185">Reference proteome</keyword>
<gene>
    <name evidence="4" type="primary">cnsH</name>
    <name type="ORF">PEX2_055420</name>
</gene>
<accession>A0A0A2JY30</accession>
<dbReference type="EC" id="3.1.-.-" evidence="6"/>
<dbReference type="EMBL" id="JQFZ01000090">
    <property type="protein sequence ID" value="KGO59701.1"/>
    <property type="molecule type" value="Genomic_DNA"/>
</dbReference>
<dbReference type="RefSeq" id="XP_016600814.1">
    <property type="nucleotide sequence ID" value="XM_016742816.1"/>
</dbReference>
<dbReference type="STRING" id="27334.A0A0A2JY30"/>
<dbReference type="ESTHER" id="penen-cnsh">
    <property type="family name" value="FSH1"/>
</dbReference>
<dbReference type="GeneID" id="27678235"/>
<dbReference type="VEuPathDB" id="FungiDB:PEXP_030530"/>
<dbReference type="HOGENOM" id="CLU_051938_4_1_1"/>
<dbReference type="OrthoDB" id="414698at2759"/>
<dbReference type="PhylomeDB" id="A0A0A2JY30"/>
<dbReference type="Proteomes" id="UP000030143">
    <property type="component" value="Unassembled WGS sequence"/>
</dbReference>
<dbReference type="GO" id="GO:0005737">
    <property type="term" value="C:cytoplasm"/>
    <property type="evidence" value="ECO:0007669"/>
    <property type="project" value="TreeGrafter"/>
</dbReference>
<dbReference type="GO" id="GO:0005634">
    <property type="term" value="C:nucleus"/>
    <property type="evidence" value="ECO:0007669"/>
    <property type="project" value="TreeGrafter"/>
</dbReference>
<dbReference type="GO" id="GO:0016787">
    <property type="term" value="F:hydrolase activity"/>
    <property type="evidence" value="ECO:0007669"/>
    <property type="project" value="UniProtKB-KW"/>
</dbReference>
<dbReference type="GO" id="GO:0017000">
    <property type="term" value="P:antibiotic biosynthetic process"/>
    <property type="evidence" value="ECO:0007669"/>
    <property type="project" value="UniProtKB-ARBA"/>
</dbReference>
<dbReference type="GO" id="GO:0072330">
    <property type="term" value="P:monocarboxylic acid biosynthetic process"/>
    <property type="evidence" value="ECO:0007669"/>
    <property type="project" value="UniProtKB-ARBA"/>
</dbReference>
<dbReference type="GO" id="GO:0019748">
    <property type="term" value="P:secondary metabolic process"/>
    <property type="evidence" value="ECO:0007669"/>
    <property type="project" value="TreeGrafter"/>
</dbReference>
<dbReference type="Gene3D" id="3.40.50.1820">
    <property type="entry name" value="alpha/beta hydrolase"/>
    <property type="match status" value="1"/>
</dbReference>
<dbReference type="InterPro" id="IPR029058">
    <property type="entry name" value="AB_hydrolase_fold"/>
</dbReference>
<dbReference type="InterPro" id="IPR005645">
    <property type="entry name" value="FSH-like_dom"/>
</dbReference>
<dbReference type="InterPro" id="IPR050593">
    <property type="entry name" value="LovG"/>
</dbReference>
<dbReference type="PANTHER" id="PTHR48070:SF4">
    <property type="entry name" value="ESTERASE ALNB"/>
    <property type="match status" value="1"/>
</dbReference>
<dbReference type="PANTHER" id="PTHR48070">
    <property type="entry name" value="ESTERASE OVCA2"/>
    <property type="match status" value="1"/>
</dbReference>
<dbReference type="Pfam" id="PF03959">
    <property type="entry name" value="FSH1"/>
    <property type="match status" value="1"/>
</dbReference>
<dbReference type="SUPFAM" id="SSF53474">
    <property type="entry name" value="alpha/beta-Hydrolases"/>
    <property type="match status" value="1"/>
</dbReference>
<sequence>MWVNTLRCPEGIEKVFPGPFACYNRLFDPGSQLDSYALIEETLHTYGPFDGAFGFSQGAALIVSYLLERRAAYPDESLPFRFLILCSPVVPLAGNAEYCHRILGCLSRDNESRIRSCQDTQISDLPERARIAMTMLTDILDASTTITQEPRRFYLDRELPDVPCALHPDLCLTRLPVATLHVRGTTDAKALWNCGFLIQSFFDSPKLRVFEHKSGHDIPRSGPEVRQMLCAMEWIIAQSELP</sequence>
<name>CNSH_PENEN</name>
<reference key="1">
    <citation type="journal article" date="2015" name="Mol. Plant Microbe Interact.">
        <title>Genome, transcriptome, and functional analyses of Penicillium expansum provide new insights into secondary metabolism and pathogenicity.</title>
        <authorList>
            <person name="Ballester A.R."/>
            <person name="Marcet-Houben M."/>
            <person name="Levin E."/>
            <person name="Sela N."/>
            <person name="Selma-Lazaro C."/>
            <person name="Carmona L."/>
            <person name="Wisniewski M."/>
            <person name="Droby S."/>
            <person name="Gonzalez-Candelas L."/>
            <person name="Gabaldon T."/>
        </authorList>
    </citation>
    <scope>NUCLEOTIDE SEQUENCE [LARGE SCALE GENOMIC DNA]</scope>
    <source>
        <strain>MD-8</strain>
    </source>
</reference>
<reference key="2">
    <citation type="journal article" date="2015" name="Angew. Chem. Int. Ed.">
        <title>Elucidation of the concise biosynthetic pathway of the communesin indole alkaloids.</title>
        <authorList>
            <person name="Lin H.C."/>
            <person name="Chiou G."/>
            <person name="Chooi Y.H."/>
            <person name="McMahon T.C."/>
            <person name="Xu W."/>
            <person name="Garg N.K."/>
            <person name="Tang Y."/>
        </authorList>
    </citation>
    <scope>IDENTIFICATION</scope>
    <scope>FUNCTION</scope>
    <scope>PATHWAY</scope>
</reference>
<reference key="3">
    <citation type="journal article" date="2016" name="J. Am. Chem. Soc.">
        <title>P450-mediated coupling of indole fragments to forge communesin and unnatural isomers.</title>
        <authorList>
            <person name="Lin H.C."/>
            <person name="McMahon T.C."/>
            <person name="Patel A."/>
            <person name="Corsello M."/>
            <person name="Simon A."/>
            <person name="Xu W."/>
            <person name="Zhao M."/>
            <person name="Houk K.N."/>
            <person name="Garg N.K."/>
            <person name="Tang Y."/>
        </authorList>
    </citation>
    <scope>FUNCTION</scope>
</reference>
<comment type="function">
    <text evidence="2 3">Serine hydrolase; part of the gene cluster that mediates the biosynthesis of communesins, a prominent class of indole alkaloids with great potential as pharmaceuticals (PubMed:25571861). Communesins are biosynthesized by the coupling of tryptamine and aurantioclavine, two building blocks derived from L-tryptophan (PubMed:25571861). The L-tryptophan decarboxylase cnsB converts L-tryptophan to tryptamine, whereas the tryptophan dimethylallyltransferase cnsF converts L-tryptophan to 4-dimethylallyl tryptophan which is further transformed to aurantioclavine by the aurantioclavine synthase cnsA, probably aided by the catalase cnsD (PubMed:25571861). The cytochrome P450 monooxygenase cnsC catalyzes the heterodimeric coupling between the two different indole moieties, tryptamine and aurantioclavine, to construct vicinal quaternary stereocenters and yield the heptacyclic communesin scaffold (PubMed:26963294). The O-methyltransferase cnsE then methylates the communesin scaffold to produce communesin K, the simplest characterized communesin that contains the heptacyclic core (PubMed:25571861). The dioxygenase cnsJ converts communesin K into communesin I (PubMed:25571861). Acylation to introduce the hexadienyl group at position N16 of communesin I by the acyltransferase cnsK leads to the production of communesin B. The hexadienyl group is produced by the highly reducing polyketide synthase cnsI, before being hydrolytically removed from cnsI by the serine hydrolase cnsH, converted into hexadienyl-CoA by the CoA ligase cnsG, and then transferred to communesin I by cnsK (PubMed:25571861). Surprisingly, cnsK may also be a promiscuous acyltransferase that can tolerate a range of acyl groups, including acetyl-, propionyl-, and butyryl-CoA, which lead to communesins A, G and H respectively (PubMed:25571861). The roles of the alpha-ketoglutarate-dependent dioxygenases cnsM and cnsP have still to be determined (PubMed:25571861).</text>
</comment>
<comment type="pathway">
    <text evidence="6">Alkaloid biosynthesis.</text>
</comment>
<comment type="similarity">
    <text evidence="5">Belongs to the AB hydrolase 3 family.</text>
</comment>
<proteinExistence type="inferred from homology"/>
<organism>
    <name type="scientific">Penicillium expansum</name>
    <name type="common">Blue mold rot fungus</name>
    <dbReference type="NCBI Taxonomy" id="27334"/>
    <lineage>
        <taxon>Eukaryota</taxon>
        <taxon>Fungi</taxon>
        <taxon>Dikarya</taxon>
        <taxon>Ascomycota</taxon>
        <taxon>Pezizomycotina</taxon>
        <taxon>Eurotiomycetes</taxon>
        <taxon>Eurotiomycetidae</taxon>
        <taxon>Eurotiales</taxon>
        <taxon>Aspergillaceae</taxon>
        <taxon>Penicillium</taxon>
    </lineage>
</organism>
<feature type="chain" id="PRO_0000446463" description="Serine hydrolase cnsH">
    <location>
        <begin position="1"/>
        <end position="242"/>
    </location>
</feature>
<feature type="active site" description="Charge relay system" evidence="1">
    <location>
        <position position="56"/>
    </location>
</feature>
<feature type="active site" description="Charge relay system" evidence="1">
    <location>
        <position position="138"/>
    </location>
</feature>
<feature type="active site" description="Charge relay system" evidence="1">
    <location>
        <position position="216"/>
    </location>
</feature>
<protein>
    <recommendedName>
        <fullName evidence="4">Serine hydrolase cnsH</fullName>
        <ecNumber evidence="6">3.1.-.-</ecNumber>
    </recommendedName>
    <alternativeName>
        <fullName evidence="4">Communesin biosynthesis cluster protein H</fullName>
    </alternativeName>
</protein>
<evidence type="ECO:0000250" key="1">
    <source>
        <dbReference type="UniProtKB" id="P38777"/>
    </source>
</evidence>
<evidence type="ECO:0000269" key="2">
    <source>
    </source>
</evidence>
<evidence type="ECO:0000269" key="3">
    <source>
    </source>
</evidence>
<evidence type="ECO:0000303" key="4">
    <source>
    </source>
</evidence>
<evidence type="ECO:0000305" key="5"/>
<evidence type="ECO:0000305" key="6">
    <source>
    </source>
</evidence>